<evidence type="ECO:0000250" key="1"/>
<evidence type="ECO:0000250" key="2">
    <source>
        <dbReference type="UniProtKB" id="P14618"/>
    </source>
</evidence>
<evidence type="ECO:0000305" key="3"/>
<sequence>MDKFNINEKMKRTKIITTIGPSTHSPGAIEELFKTGMTTIRLNFSHGDHAEQGARIVWAREVSAKIGKPISVLLDTKGPEIHWRIKGLLQKSLNIYHQMNNSLMFSPSFCKFLHYHYTLLLSKKTKKQLLKIVKKLKKLQSQHYNLAHGLRETWTSSFCFNERPSIWRLLSSFKQIVTSFKISLVSKVLIKL</sequence>
<gene>
    <name type="primary">pyk</name>
</gene>
<accession>P19680</accession>
<accession>O30600</accession>
<dbReference type="EC" id="2.7.1.40"/>
<dbReference type="EMBL" id="AF012877">
    <property type="protein sequence ID" value="AAB69999.1"/>
    <property type="molecule type" value="Genomic_DNA"/>
</dbReference>
<dbReference type="PIR" id="F35270">
    <property type="entry name" value="F35270"/>
</dbReference>
<dbReference type="SMR" id="P19680"/>
<dbReference type="STRING" id="2133.SCITRI_001127"/>
<dbReference type="UniPathway" id="UPA00109">
    <property type="reaction ID" value="UER00188"/>
</dbReference>
<dbReference type="GO" id="GO:0005524">
    <property type="term" value="F:ATP binding"/>
    <property type="evidence" value="ECO:0007669"/>
    <property type="project" value="UniProtKB-KW"/>
</dbReference>
<dbReference type="GO" id="GO:0016301">
    <property type="term" value="F:kinase activity"/>
    <property type="evidence" value="ECO:0007669"/>
    <property type="project" value="UniProtKB-KW"/>
</dbReference>
<dbReference type="GO" id="GO:0000287">
    <property type="term" value="F:magnesium ion binding"/>
    <property type="evidence" value="ECO:0007669"/>
    <property type="project" value="InterPro"/>
</dbReference>
<dbReference type="GO" id="GO:0030955">
    <property type="term" value="F:potassium ion binding"/>
    <property type="evidence" value="ECO:0007669"/>
    <property type="project" value="InterPro"/>
</dbReference>
<dbReference type="GO" id="GO:0004743">
    <property type="term" value="F:pyruvate kinase activity"/>
    <property type="evidence" value="ECO:0007669"/>
    <property type="project" value="UniProtKB-EC"/>
</dbReference>
<dbReference type="Gene3D" id="3.20.20.60">
    <property type="entry name" value="Phosphoenolpyruvate-binding domains"/>
    <property type="match status" value="1"/>
</dbReference>
<dbReference type="InterPro" id="IPR001697">
    <property type="entry name" value="Pyr_Knase"/>
</dbReference>
<dbReference type="InterPro" id="IPR015813">
    <property type="entry name" value="Pyrv/PenolPyrv_kinase-like_dom"/>
</dbReference>
<dbReference type="InterPro" id="IPR040442">
    <property type="entry name" value="Pyrv_kinase-like_dom_sf"/>
</dbReference>
<dbReference type="InterPro" id="IPR015793">
    <property type="entry name" value="Pyrv_Knase_brl"/>
</dbReference>
<dbReference type="PANTHER" id="PTHR11817">
    <property type="entry name" value="PYRUVATE KINASE"/>
    <property type="match status" value="1"/>
</dbReference>
<dbReference type="Pfam" id="PF00224">
    <property type="entry name" value="PK"/>
    <property type="match status" value="1"/>
</dbReference>
<dbReference type="SUPFAM" id="SSF51621">
    <property type="entry name" value="Phosphoenolpyruvate/pyruvate domain"/>
    <property type="match status" value="1"/>
</dbReference>
<feature type="chain" id="PRO_0000112084" description="Pyruvate kinase">
    <location>
        <begin position="1"/>
        <end position="192" status="greater than"/>
    </location>
</feature>
<feature type="binding site" evidence="1">
    <location>
        <position position="41"/>
    </location>
    <ligand>
        <name>substrate</name>
    </ligand>
</feature>
<feature type="binding site" evidence="2">
    <location>
        <begin position="43"/>
        <end position="46"/>
    </location>
    <ligand>
        <name>ATP</name>
        <dbReference type="ChEBI" id="CHEBI:30616"/>
    </ligand>
</feature>
<feature type="binding site" evidence="1">
    <location>
        <position position="43"/>
    </location>
    <ligand>
        <name>K(+)</name>
        <dbReference type="ChEBI" id="CHEBI:29103"/>
    </ligand>
</feature>
<feature type="binding site" evidence="1">
    <location>
        <position position="45"/>
    </location>
    <ligand>
        <name>K(+)</name>
        <dbReference type="ChEBI" id="CHEBI:29103"/>
    </ligand>
</feature>
<feature type="binding site" evidence="1">
    <location>
        <position position="75"/>
    </location>
    <ligand>
        <name>K(+)</name>
        <dbReference type="ChEBI" id="CHEBI:29103"/>
    </ligand>
</feature>
<feature type="binding site" evidence="1">
    <location>
        <position position="76"/>
    </location>
    <ligand>
        <name>K(+)</name>
        <dbReference type="ChEBI" id="CHEBI:29103"/>
    </ligand>
</feature>
<feature type="sequence conflict" description="In Ref. 2; AAB69999." evidence="3" ref="2">
    <original>HWRIKGLLQKSLNIYHQMNNSLMFSPSFCKFLHYHYTLLLSKKTKKQLLKIVKKLKKLQSQHYNLAHGLRETWTSSFCFNERPSIWRLLSSFKQIVTSFKISLVSKVLIKL</original>
    <variation>RAGIMKGGKQEIVAGATVTIYSLPTEYQNREGTGTEITVSYDMSQDLKVGDVVLVDDGKLQLNVTGIKPGIIETKA</variation>
    <location>
        <begin position="82"/>
        <end position="192"/>
    </location>
</feature>
<feature type="non-terminal residue">
    <location>
        <position position="192"/>
    </location>
</feature>
<comment type="catalytic activity">
    <reaction>
        <text>pyruvate + ATP = phosphoenolpyruvate + ADP + H(+)</text>
        <dbReference type="Rhea" id="RHEA:18157"/>
        <dbReference type="ChEBI" id="CHEBI:15361"/>
        <dbReference type="ChEBI" id="CHEBI:15378"/>
        <dbReference type="ChEBI" id="CHEBI:30616"/>
        <dbReference type="ChEBI" id="CHEBI:58702"/>
        <dbReference type="ChEBI" id="CHEBI:456216"/>
        <dbReference type="EC" id="2.7.1.40"/>
    </reaction>
</comment>
<comment type="cofactor">
    <cofactor>
        <name>Mg(2+)</name>
        <dbReference type="ChEBI" id="CHEBI:18420"/>
    </cofactor>
</comment>
<comment type="cofactor">
    <cofactor>
        <name>K(+)</name>
        <dbReference type="ChEBI" id="CHEBI:29103"/>
    </cofactor>
</comment>
<comment type="pathway">
    <text>Carbohydrate degradation; glycolysis; pyruvate from D-glyceraldehyde 3-phosphate: step 5/5.</text>
</comment>
<comment type="similarity">
    <text evidence="3">Belongs to the pyruvate kinase family.</text>
</comment>
<name>KPYK_SPICI</name>
<proteinExistence type="inferred from homology"/>
<reference key="1">
    <citation type="journal article" date="1990" name="J. Bacteriol.">
        <title>Organization and nucleotide sequences of the Spiroplasma citri genes for ribosomal protein S2, elongation factor Ts, spiralin, phosphofructokinase, pyruvate kinase, and an unidentified protein.</title>
        <authorList>
            <person name="Chevalier C."/>
            <person name="Saillard C."/>
            <person name="Bove J.M."/>
        </authorList>
    </citation>
    <scope>NUCLEOTIDE SEQUENCE [GENOMIC DNA]</scope>
    <source>
        <strain>ATCC 27556 / NCPPB 2647 / R8A2</strain>
    </source>
</reference>
<reference key="2">
    <citation type="journal article" date="1998" name="Curr. Microbiol.">
        <title>Gene organization and transcriptional analysis of the Spiroplasma citri rpsB/tsf/x operon.</title>
        <authorList>
            <person name="Le Dantec L."/>
            <person name="Bove J.M."/>
            <person name="Saillard C."/>
        </authorList>
    </citation>
    <scope>NUCLEOTIDE SEQUENCE [GENOMIC DNA]</scope>
</reference>
<keyword id="KW-0067">ATP-binding</keyword>
<keyword id="KW-0324">Glycolysis</keyword>
<keyword id="KW-0418">Kinase</keyword>
<keyword id="KW-0460">Magnesium</keyword>
<keyword id="KW-0479">Metal-binding</keyword>
<keyword id="KW-0547">Nucleotide-binding</keyword>
<keyword id="KW-0630">Potassium</keyword>
<keyword id="KW-0670">Pyruvate</keyword>
<keyword id="KW-0808">Transferase</keyword>
<protein>
    <recommendedName>
        <fullName>Pyruvate kinase</fullName>
        <shortName>PK</shortName>
        <ecNumber>2.7.1.40</ecNumber>
    </recommendedName>
</protein>
<organism>
    <name type="scientific">Spiroplasma citri</name>
    <dbReference type="NCBI Taxonomy" id="2133"/>
    <lineage>
        <taxon>Bacteria</taxon>
        <taxon>Bacillati</taxon>
        <taxon>Mycoplasmatota</taxon>
        <taxon>Mollicutes</taxon>
        <taxon>Entomoplasmatales</taxon>
        <taxon>Spiroplasmataceae</taxon>
        <taxon>Spiroplasma</taxon>
    </lineage>
</organism>